<proteinExistence type="evidence at protein level"/>
<gene>
    <name type="primary">Hdgfl2</name>
    <name type="synonym">Hdgf3</name>
    <name type="synonym">Hdgfrp2</name>
</gene>
<name>HDGR2_RAT</name>
<keyword id="KW-0025">Alternative splicing</keyword>
<keyword id="KW-0175">Coiled coil</keyword>
<keyword id="KW-0963">Cytoplasm</keyword>
<keyword id="KW-0227">DNA damage</keyword>
<keyword id="KW-0233">DNA recombination</keyword>
<keyword id="KW-0234">DNA repair</keyword>
<keyword id="KW-1017">Isopeptide bond</keyword>
<keyword id="KW-0517">Myogenesis</keyword>
<keyword id="KW-0539">Nucleus</keyword>
<keyword id="KW-0597">Phosphoprotein</keyword>
<keyword id="KW-1185">Reference proteome</keyword>
<keyword id="KW-0832">Ubl conjugation</keyword>
<comment type="function">
    <text evidence="2">Acts as an epigenetic regulator of myogenesis in cooperation with DPF3a (isoform 2 of DPF3/BAF45C) (By similarity). Associates with the BAF complex via its interaction with DPF3a and HDGFL2-DPF3a activate myogenic genes by increasing chromatin accessibility through recruitment of SMARCA4/BRG1/BAF190A (ATPase subunit of the BAF complex) to myogenic gene promoters (By similarity). Promotes the repair of DNA double-strand breaks (DSBs) through the homologous recombination pathway by facilitating the recruitment of the DNA endonuclease RBBP8 to the DSBs (By similarity). Preferentially binds to chromatin regions marked by H3K9me3, H3K27me3 and H3K36me2 (By similarity). Involved in cellular growth control, through the regulation of cyclin D1 expression (By similarity).</text>
</comment>
<comment type="subunit">
    <text evidence="1 2">Interacts with HDGF (By similarity). Interacts with trimethylated 'Lys-36' of histone H3 (H3K36me3). Interacts with trimethylated 'Lys-79' of histone H3 (H3K79me3), but has higher affinity for H3K36me3 (By similarity). Interacts with IWS1 (By similarity). Interacts with H2AX, POGZ, RBBP8 and CBX1 (By similarity). Interacts with histones H3K9me3, H3K27me3 and H3K36me2 (By similarity). Interacts with DPF3a (isoform 2 of DPF3/BAF45C). Interacts with SMARCA4/BRG1/BAF190A, SMARCC1/BAF155 and SMARCD1/BAF60A in a DPF3a-dependent manner (By similarity).</text>
</comment>
<comment type="subcellular location">
    <subcellularLocation>
        <location evidence="5">Nucleus</location>
    </subcellularLocation>
    <subcellularLocation>
        <location evidence="5">Cytoplasm</location>
    </subcellularLocation>
</comment>
<comment type="alternative products">
    <event type="alternative splicing"/>
    <isoform>
        <id>Q925G1-1</id>
        <name>1</name>
        <sequence type="displayed"/>
    </isoform>
    <isoform>
        <id>Q925G1-2</id>
        <name>2</name>
        <sequence type="described" ref="VSP_031120"/>
    </isoform>
</comment>
<comment type="tissue specificity">
    <text evidence="5">Expressed in the spinal cord (at protein level) (PubMed:26252862). Primarily restricted to neurons, astrocytes and oligodendrocytes and is particularly expressed in motor neurons of the anterior horn (at protein level) (PubMed:26252862). Significantly up-regulated in the injured spinal cord (at protein level) (PubMed:26252862).</text>
</comment>
<comment type="developmental stage">
    <text evidence="5">Expressed at highest levels in the spinal cord at embryonic day 9, expression remains high at postnatal day 7 (P7), become weak at P14 and is not detectable at two months (at protein level).</text>
</comment>
<comment type="similarity">
    <text evidence="7">Belongs to the HDGF family.</text>
</comment>
<dbReference type="EMBL" id="AF355102">
    <property type="protein sequence ID" value="AAK50635.1"/>
    <property type="molecule type" value="mRNA"/>
</dbReference>
<dbReference type="EMBL" id="BC071178">
    <property type="protein sequence ID" value="AAH71178.1"/>
    <property type="molecule type" value="mRNA"/>
</dbReference>
<dbReference type="EMBL" id="BC087695">
    <property type="protein sequence ID" value="AAH87695.1"/>
    <property type="molecule type" value="mRNA"/>
</dbReference>
<dbReference type="RefSeq" id="NP_598232.1">
    <property type="nucleotide sequence ID" value="NM_133548.1"/>
</dbReference>
<dbReference type="RefSeq" id="XP_006244353.1">
    <molecule id="Q925G1-2"/>
    <property type="nucleotide sequence ID" value="XM_006244291.5"/>
</dbReference>
<dbReference type="SMR" id="Q925G1"/>
<dbReference type="FunCoup" id="Q925G1">
    <property type="interactions" value="1448"/>
</dbReference>
<dbReference type="IntAct" id="Q925G1">
    <property type="interactions" value="1"/>
</dbReference>
<dbReference type="STRING" id="10116.ENSRNOP00000064555"/>
<dbReference type="iPTMnet" id="Q925G1"/>
<dbReference type="PhosphoSitePlus" id="Q925G1"/>
<dbReference type="jPOST" id="Q925G1"/>
<dbReference type="PaxDb" id="10116-ENSRNOP00000064555"/>
<dbReference type="GeneID" id="171073"/>
<dbReference type="KEGG" id="rno:171073"/>
<dbReference type="AGR" id="RGD:621013"/>
<dbReference type="CTD" id="84717"/>
<dbReference type="RGD" id="621013">
    <property type="gene designation" value="Hdgfl2"/>
</dbReference>
<dbReference type="VEuPathDB" id="HostDB:ENSRNOG00000049142"/>
<dbReference type="eggNOG" id="KOG1904">
    <property type="taxonomic scope" value="Eukaryota"/>
</dbReference>
<dbReference type="HOGENOM" id="CLU_034054_0_0_1"/>
<dbReference type="InParanoid" id="Q925G1"/>
<dbReference type="OrthoDB" id="62853at2759"/>
<dbReference type="PhylomeDB" id="Q925G1"/>
<dbReference type="PRO" id="PR:Q925G1"/>
<dbReference type="Proteomes" id="UP000002494">
    <property type="component" value="Chromosome 9"/>
</dbReference>
<dbReference type="Bgee" id="ENSRNOG00000049142">
    <property type="expression patterns" value="Expressed in testis and 20 other cell types or tissues"/>
</dbReference>
<dbReference type="ExpressionAtlas" id="Q925G1">
    <property type="expression patterns" value="baseline and differential"/>
</dbReference>
<dbReference type="GO" id="GO:0005737">
    <property type="term" value="C:cytoplasm"/>
    <property type="evidence" value="ECO:0000314"/>
    <property type="project" value="UniProtKB"/>
</dbReference>
<dbReference type="GO" id="GO:0005634">
    <property type="term" value="C:nucleus"/>
    <property type="evidence" value="ECO:0000314"/>
    <property type="project" value="UniProtKB"/>
</dbReference>
<dbReference type="GO" id="GO:0061628">
    <property type="term" value="F:histone H3K27me3 reader activity"/>
    <property type="evidence" value="ECO:0000250"/>
    <property type="project" value="UniProtKB"/>
</dbReference>
<dbReference type="GO" id="GO:0062072">
    <property type="term" value="F:histone H3K9me2/3 reader activity"/>
    <property type="evidence" value="ECO:0000250"/>
    <property type="project" value="UniProtKB"/>
</dbReference>
<dbReference type="GO" id="GO:0140566">
    <property type="term" value="F:histone reader activity"/>
    <property type="evidence" value="ECO:0000266"/>
    <property type="project" value="RGD"/>
</dbReference>
<dbReference type="GO" id="GO:0035064">
    <property type="term" value="F:methylated histone binding"/>
    <property type="evidence" value="ECO:0000266"/>
    <property type="project" value="RGD"/>
</dbReference>
<dbReference type="GO" id="GO:0006338">
    <property type="term" value="P:chromatin remodeling"/>
    <property type="evidence" value="ECO:0000318"/>
    <property type="project" value="GO_Central"/>
</dbReference>
<dbReference type="GO" id="GO:0006310">
    <property type="term" value="P:DNA recombination"/>
    <property type="evidence" value="ECO:0007669"/>
    <property type="project" value="UniProtKB-KW"/>
</dbReference>
<dbReference type="GO" id="GO:0006281">
    <property type="term" value="P:DNA repair"/>
    <property type="evidence" value="ECO:0007669"/>
    <property type="project" value="UniProtKB-KW"/>
</dbReference>
<dbReference type="GO" id="GO:0140861">
    <property type="term" value="P:DNA repair-dependent chromatin remodeling"/>
    <property type="evidence" value="ECO:0000266"/>
    <property type="project" value="RGD"/>
</dbReference>
<dbReference type="GO" id="GO:0042692">
    <property type="term" value="P:muscle cell differentiation"/>
    <property type="evidence" value="ECO:0000266"/>
    <property type="project" value="RGD"/>
</dbReference>
<dbReference type="GO" id="GO:0007517">
    <property type="term" value="P:muscle organ development"/>
    <property type="evidence" value="ECO:0007669"/>
    <property type="project" value="UniProtKB-KW"/>
</dbReference>
<dbReference type="GO" id="GO:0030307">
    <property type="term" value="P:positive regulation of cell growth"/>
    <property type="evidence" value="ECO:0000250"/>
    <property type="project" value="UniProtKB"/>
</dbReference>
<dbReference type="GO" id="GO:1905168">
    <property type="term" value="P:positive regulation of double-strand break repair via homologous recombination"/>
    <property type="evidence" value="ECO:0000250"/>
    <property type="project" value="UniProtKB"/>
</dbReference>
<dbReference type="GO" id="GO:0043403">
    <property type="term" value="P:skeletal muscle tissue regeneration"/>
    <property type="evidence" value="ECO:0000266"/>
    <property type="project" value="RGD"/>
</dbReference>
<dbReference type="CDD" id="cd20149">
    <property type="entry name" value="PWWP_HDGFL2"/>
    <property type="match status" value="1"/>
</dbReference>
<dbReference type="FunFam" id="2.30.30.140:FF:000017">
    <property type="entry name" value="hepatoma-derived growth factor isoform X1"/>
    <property type="match status" value="1"/>
</dbReference>
<dbReference type="FunFam" id="1.20.930.10:FF:000009">
    <property type="entry name" value="Hepatoma-derived growth factor-related protein 2"/>
    <property type="match status" value="1"/>
</dbReference>
<dbReference type="Gene3D" id="2.30.30.140">
    <property type="match status" value="1"/>
</dbReference>
<dbReference type="Gene3D" id="1.20.930.10">
    <property type="entry name" value="Conserved domain common to transcription factors TFIIS, elongin A, CRSP70"/>
    <property type="match status" value="1"/>
</dbReference>
<dbReference type="InterPro" id="IPR036218">
    <property type="entry name" value="HIVI-bd_sf"/>
</dbReference>
<dbReference type="InterPro" id="IPR021567">
    <property type="entry name" value="LEDGF_IBD"/>
</dbReference>
<dbReference type="InterPro" id="IPR000313">
    <property type="entry name" value="PWWP_dom"/>
</dbReference>
<dbReference type="InterPro" id="IPR035441">
    <property type="entry name" value="TFIIS/LEDGF_dom_sf"/>
</dbReference>
<dbReference type="PANTHER" id="PTHR12550">
    <property type="entry name" value="HEPATOMA-DERIVED GROWTH FACTOR-RELATED"/>
    <property type="match status" value="1"/>
</dbReference>
<dbReference type="PANTHER" id="PTHR12550:SF18">
    <property type="entry name" value="HEPATOMA-DERIVED GROWTH FACTOR-RELATED PROTEIN 2"/>
    <property type="match status" value="1"/>
</dbReference>
<dbReference type="Pfam" id="PF11467">
    <property type="entry name" value="LEDGF"/>
    <property type="match status" value="1"/>
</dbReference>
<dbReference type="Pfam" id="PF00855">
    <property type="entry name" value="PWWP"/>
    <property type="match status" value="1"/>
</dbReference>
<dbReference type="SMART" id="SM00293">
    <property type="entry name" value="PWWP"/>
    <property type="match status" value="1"/>
</dbReference>
<dbReference type="SUPFAM" id="SSF140576">
    <property type="entry name" value="HIV integrase-binding domain"/>
    <property type="match status" value="1"/>
</dbReference>
<dbReference type="SUPFAM" id="SSF63748">
    <property type="entry name" value="Tudor/PWWP/MBT"/>
    <property type="match status" value="1"/>
</dbReference>
<dbReference type="PROSITE" id="PS50812">
    <property type="entry name" value="PWWP"/>
    <property type="match status" value="1"/>
</dbReference>
<sequence>MPHAFKPGDLVFAKMKGYPHWPARIDDIADGAVKPPPNKYPIFFFGTHETAFLGPKDLFPYDKCKDKYGKPNKRKGFNEGLWEIQNNPHASYSAPLPVSSSDSEAPEADLGGGSDADKEKEARRVMTVTAVTTTATSGRTESDSDSDKNSDHSGLKRKTPVLKMSVSKRARKASSDLDQASVSPSEEDSESPSESEKTSDQDFTPEKKTIARAPRRAPLGGRKKKKVPSASDSDSRADSDGAKEEPVVTAQPSPSSSSSSSSSSASDSDVSIKKPPRGRKPAEKPPPKPRGRRSKPERPPSTSSSDSDSDSGEVDRISEWKRRDEERRRELEARRRREQEEELRRLREQEREEKERRKERAERGGSSGEELEDEEPVKKRSRKARGRGTPSSSDSEPEGELGKEGKKLAKKSQLQGSESARKPGQKEKRGRPDEKPRARPVKVERTRKRSEGLSLDRKGEKKKEPSVEERLQKLHSEIKFALKVDNPDVRRCLSALEELGTLQVTSQILQKNTDVVATLKKIRRYKANKDVMAKAAEVYTRLKSRVLGPKVEALQKVNKAGAEKERADGEKVEEQPGEQAPRELAEDEPSTDRSAPVNGEAASQKGENTEDGAQEDGQDLEDGPRGGSSEELHDSPQDSSDPARPGNEHQDHERMQLASESADDDDEDS</sequence>
<feature type="chain" id="PRO_0000317645" description="Hepatoma-derived growth factor-related protein 2">
    <location>
        <begin position="1"/>
        <end position="669"/>
    </location>
</feature>
<feature type="domain" description="PWWP" evidence="3">
    <location>
        <begin position="7"/>
        <end position="64"/>
    </location>
</feature>
<feature type="region of interest" description="Disordered" evidence="4">
    <location>
        <begin position="92"/>
        <end position="469"/>
    </location>
</feature>
<feature type="region of interest" description="Interaction with DPF3/BAF45C isoform 2" evidence="2">
    <location>
        <begin position="466"/>
        <end position="548"/>
    </location>
</feature>
<feature type="region of interest" description="Disordered" evidence="4">
    <location>
        <begin position="558"/>
        <end position="669"/>
    </location>
</feature>
<feature type="compositionally biased region" description="Basic and acidic residues" evidence="4">
    <location>
        <begin position="115"/>
        <end position="124"/>
    </location>
</feature>
<feature type="compositionally biased region" description="Low complexity" evidence="4">
    <location>
        <begin position="125"/>
        <end position="139"/>
    </location>
</feature>
<feature type="compositionally biased region" description="Basic and acidic residues" evidence="4">
    <location>
        <begin position="140"/>
        <end position="154"/>
    </location>
</feature>
<feature type="compositionally biased region" description="Basic residues" evidence="4">
    <location>
        <begin position="155"/>
        <end position="172"/>
    </location>
</feature>
<feature type="compositionally biased region" description="Basic and acidic residues" evidence="4">
    <location>
        <begin position="194"/>
        <end position="209"/>
    </location>
</feature>
<feature type="compositionally biased region" description="Basic and acidic residues" evidence="4">
    <location>
        <begin position="233"/>
        <end position="246"/>
    </location>
</feature>
<feature type="compositionally biased region" description="Low complexity" evidence="4">
    <location>
        <begin position="252"/>
        <end position="269"/>
    </location>
</feature>
<feature type="compositionally biased region" description="Basic and acidic residues" evidence="4">
    <location>
        <begin position="313"/>
        <end position="363"/>
    </location>
</feature>
<feature type="compositionally biased region" description="Basic and acidic residues" evidence="4">
    <location>
        <begin position="419"/>
        <end position="469"/>
    </location>
</feature>
<feature type="compositionally biased region" description="Basic and acidic residues" evidence="4">
    <location>
        <begin position="561"/>
        <end position="584"/>
    </location>
</feature>
<feature type="compositionally biased region" description="Acidic residues" evidence="4">
    <location>
        <begin position="609"/>
        <end position="621"/>
    </location>
</feature>
<feature type="compositionally biased region" description="Basic and acidic residues" evidence="4">
    <location>
        <begin position="622"/>
        <end position="636"/>
    </location>
</feature>
<feature type="compositionally biased region" description="Basic and acidic residues" evidence="4">
    <location>
        <begin position="646"/>
        <end position="655"/>
    </location>
</feature>
<feature type="modified residue" description="Phosphoserine" evidence="2">
    <location>
        <position position="114"/>
    </location>
</feature>
<feature type="modified residue" description="Phosphoserine" evidence="2">
    <location>
        <position position="137"/>
    </location>
</feature>
<feature type="modified residue" description="Phosphoserine" evidence="2">
    <location>
        <position position="165"/>
    </location>
</feature>
<feature type="modified residue" description="Phosphoserine" evidence="2">
    <location>
        <position position="229"/>
    </location>
</feature>
<feature type="modified residue" description="Phosphoserine" evidence="2">
    <location>
        <position position="231"/>
    </location>
</feature>
<feature type="modified residue" description="Phosphoserine" evidence="2">
    <location>
        <position position="233"/>
    </location>
</feature>
<feature type="modified residue" description="Phosphoserine" evidence="2">
    <location>
        <position position="239"/>
    </location>
</feature>
<feature type="modified residue" description="Phosphoserine" evidence="2">
    <location>
        <position position="268"/>
    </location>
</feature>
<feature type="modified residue" description="Phosphoserine" evidence="2">
    <location>
        <position position="307"/>
    </location>
</feature>
<feature type="modified residue" description="Phosphoserine" evidence="8">
    <location>
        <position position="366"/>
    </location>
</feature>
<feature type="modified residue" description="Phosphoserine" evidence="2">
    <location>
        <position position="367"/>
    </location>
</feature>
<feature type="modified residue" description="Phosphoserine" evidence="2">
    <location>
        <position position="391"/>
    </location>
</feature>
<feature type="modified residue" description="Phosphoserine" evidence="2">
    <location>
        <position position="392"/>
    </location>
</feature>
<feature type="modified residue" description="Phosphoserine" evidence="2">
    <location>
        <position position="393"/>
    </location>
</feature>
<feature type="modified residue" description="Phosphoserine" evidence="2">
    <location>
        <position position="395"/>
    </location>
</feature>
<feature type="modified residue" description="Phosphoserine" evidence="8">
    <location>
        <position position="450"/>
    </location>
</feature>
<feature type="modified residue" description="Phosphoserine" evidence="8">
    <location>
        <position position="454"/>
    </location>
</feature>
<feature type="modified residue" description="Phosphothreonine" evidence="8">
    <location>
        <position position="609"/>
    </location>
</feature>
<feature type="modified residue" description="Phosphoserine" evidence="2">
    <location>
        <position position="628"/>
    </location>
</feature>
<feature type="modified residue" description="Phosphoserine" evidence="2">
    <location>
        <position position="629"/>
    </location>
</feature>
<feature type="modified residue" description="Phosphoserine" evidence="1">
    <location>
        <position position="635"/>
    </location>
</feature>
<feature type="modified residue" description="Phosphoserine" evidence="1">
    <location>
        <position position="640"/>
    </location>
</feature>
<feature type="modified residue" description="Phosphoserine" evidence="8">
    <location>
        <position position="659"/>
    </location>
</feature>
<feature type="modified residue" description="Phosphoserine" evidence="8">
    <location>
        <position position="661"/>
    </location>
</feature>
<feature type="modified residue" description="Phosphoserine" evidence="1">
    <location>
        <position position="669"/>
    </location>
</feature>
<feature type="cross-link" description="Glycyl lysine isopeptide (Lys-Gly) (interchain with G-Cter in SUMO2)" evidence="2">
    <location>
        <position position="550"/>
    </location>
</feature>
<feature type="splice variant" id="VSP_031120" description="In isoform 2." evidence="6">
    <location>
        <position position="635"/>
    </location>
</feature>
<feature type="sequence conflict" description="In Ref. 1; AAK50635." evidence="7" ref="1">
    <original>S</original>
    <variation>A</variation>
    <location>
        <position position="257"/>
    </location>
</feature>
<reference key="1">
    <citation type="submission" date="2001-03" db="EMBL/GenBank/DDBJ databases">
        <authorList>
            <person name="Yu L."/>
            <person name="Zhang P."/>
        </authorList>
    </citation>
    <scope>NUCLEOTIDE SEQUENCE [MRNA] (ISOFORM 1)</scope>
</reference>
<reference key="2">
    <citation type="journal article" date="2004" name="Genome Res.">
        <title>The status, quality, and expansion of the NIH full-length cDNA project: the Mammalian Gene Collection (MGC).</title>
        <authorList>
            <consortium name="The MGC Project Team"/>
        </authorList>
    </citation>
    <scope>NUCLEOTIDE SEQUENCE [LARGE SCALE MRNA] (ISOFORMS 1 AND 2)</scope>
    <source>
        <tissue>Brain</tissue>
        <tissue>Lung</tissue>
    </source>
</reference>
<reference key="3">
    <citation type="journal article" date="2012" name="Nat. Commun.">
        <title>Quantitative maps of protein phosphorylation sites across 14 different rat organs and tissues.</title>
        <authorList>
            <person name="Lundby A."/>
            <person name="Secher A."/>
            <person name="Lage K."/>
            <person name="Nordsborg N.B."/>
            <person name="Dmytriyev A."/>
            <person name="Lundby C."/>
            <person name="Olsen J.V."/>
        </authorList>
    </citation>
    <scope>PHOSPHORYLATION [LARGE SCALE ANALYSIS] AT SER-366; SER-450; SER-454; THR-609; SER-659 AND SER-661</scope>
    <scope>IDENTIFICATION BY MASS SPECTROMETRY [LARGE SCALE ANALYSIS]</scope>
</reference>
<reference key="4">
    <citation type="journal article" date="2015" name="Mol. Med. Report.">
        <title>Hepatoma-derived growth factor-2 is highly expressed during development and in spinal cord injury.</title>
        <authorList>
            <person name="Zhuang Z."/>
            <person name="Mei G."/>
            <person name="Liu W."/>
            <person name="Chen Y."/>
            <person name="Zeng J."/>
            <person name="Zhang W."/>
            <person name="Yao G."/>
            <person name="Wang X."/>
        </authorList>
    </citation>
    <scope>SUBCELLULAR LOCATION</scope>
    <scope>TISSUE SPECIFICITY</scope>
    <scope>DEVELOPMENTAL STAGE</scope>
</reference>
<evidence type="ECO:0000250" key="1">
    <source>
        <dbReference type="UniProtKB" id="Q3UMU9"/>
    </source>
</evidence>
<evidence type="ECO:0000250" key="2">
    <source>
        <dbReference type="UniProtKB" id="Q7Z4V5"/>
    </source>
</evidence>
<evidence type="ECO:0000255" key="3">
    <source>
        <dbReference type="PROSITE-ProRule" id="PRU00162"/>
    </source>
</evidence>
<evidence type="ECO:0000256" key="4">
    <source>
        <dbReference type="SAM" id="MobiDB-lite"/>
    </source>
</evidence>
<evidence type="ECO:0000269" key="5">
    <source>
    </source>
</evidence>
<evidence type="ECO:0000303" key="6">
    <source>
    </source>
</evidence>
<evidence type="ECO:0000305" key="7"/>
<evidence type="ECO:0007744" key="8">
    <source>
    </source>
</evidence>
<protein>
    <recommendedName>
        <fullName>Hepatoma-derived growth factor-related protein 2</fullName>
        <shortName>HRP-2</shortName>
    </recommendedName>
    <alternativeName>
        <fullName>Hepatoma-derived growth factor 3</fullName>
        <shortName>HDGF-3</shortName>
    </alternativeName>
</protein>
<accession>Q925G1</accession>
<accession>Q5PPH2</accession>
<accession>Q68G63</accession>
<organism>
    <name type="scientific">Rattus norvegicus</name>
    <name type="common">Rat</name>
    <dbReference type="NCBI Taxonomy" id="10116"/>
    <lineage>
        <taxon>Eukaryota</taxon>
        <taxon>Metazoa</taxon>
        <taxon>Chordata</taxon>
        <taxon>Craniata</taxon>
        <taxon>Vertebrata</taxon>
        <taxon>Euteleostomi</taxon>
        <taxon>Mammalia</taxon>
        <taxon>Eutheria</taxon>
        <taxon>Euarchontoglires</taxon>
        <taxon>Glires</taxon>
        <taxon>Rodentia</taxon>
        <taxon>Myomorpha</taxon>
        <taxon>Muroidea</taxon>
        <taxon>Muridae</taxon>
        <taxon>Murinae</taxon>
        <taxon>Rattus</taxon>
    </lineage>
</organism>